<organism>
    <name type="scientific">Geobacillus stearothermophilus</name>
    <name type="common">Bacillus stearothermophilus</name>
    <dbReference type="NCBI Taxonomy" id="1422"/>
    <lineage>
        <taxon>Bacteria</taxon>
        <taxon>Bacillati</taxon>
        <taxon>Bacillota</taxon>
        <taxon>Bacilli</taxon>
        <taxon>Bacillales</taxon>
        <taxon>Anoxybacillaceae</taxon>
        <taxon>Geobacillus</taxon>
    </lineage>
</organism>
<protein>
    <recommendedName>
        <fullName evidence="1">Acetylglutamate kinase</fullName>
        <ecNumber evidence="1">2.7.2.8</ecNumber>
    </recommendedName>
    <alternativeName>
        <fullName evidence="1">N-acetyl-L-glutamate 5-phosphotransferase</fullName>
    </alternativeName>
    <alternativeName>
        <fullName evidence="1">NAG kinase</fullName>
        <shortName evidence="1">NAGK</shortName>
    </alternativeName>
</protein>
<evidence type="ECO:0000255" key="1">
    <source>
        <dbReference type="HAMAP-Rule" id="MF_00082"/>
    </source>
</evidence>
<keyword id="KW-0028">Amino-acid biosynthesis</keyword>
<keyword id="KW-0055">Arginine biosynthesis</keyword>
<keyword id="KW-0067">ATP-binding</keyword>
<keyword id="KW-0963">Cytoplasm</keyword>
<keyword id="KW-0418">Kinase</keyword>
<keyword id="KW-0547">Nucleotide-binding</keyword>
<keyword id="KW-0808">Transferase</keyword>
<proteinExistence type="inferred from homology"/>
<comment type="function">
    <text evidence="1">Catalyzes the ATP-dependent phosphorylation of N-acetyl-L-glutamate.</text>
</comment>
<comment type="catalytic activity">
    <reaction evidence="1">
        <text>N-acetyl-L-glutamate + ATP = N-acetyl-L-glutamyl 5-phosphate + ADP</text>
        <dbReference type="Rhea" id="RHEA:14629"/>
        <dbReference type="ChEBI" id="CHEBI:30616"/>
        <dbReference type="ChEBI" id="CHEBI:44337"/>
        <dbReference type="ChEBI" id="CHEBI:57936"/>
        <dbReference type="ChEBI" id="CHEBI:456216"/>
        <dbReference type="EC" id="2.7.2.8"/>
    </reaction>
</comment>
<comment type="pathway">
    <text evidence="1">Amino-acid biosynthesis; L-arginine biosynthesis; N(2)-acetyl-L-ornithine from L-glutamate: step 2/4.</text>
</comment>
<comment type="subunit">
    <text>Homodimer.</text>
</comment>
<comment type="subcellular location">
    <subcellularLocation>
        <location evidence="1">Cytoplasm</location>
    </subcellularLocation>
</comment>
<comment type="similarity">
    <text evidence="1">Belongs to the acetylglutamate kinase family. ArgB subfamily.</text>
</comment>
<name>ARGB_GEOSE</name>
<dbReference type="EC" id="2.7.2.8" evidence="1"/>
<dbReference type="EMBL" id="L06036">
    <property type="protein sequence ID" value="AAA22198.1"/>
    <property type="molecule type" value="Genomic_DNA"/>
</dbReference>
<dbReference type="PIR" id="I39767">
    <property type="entry name" value="I39767"/>
</dbReference>
<dbReference type="SMR" id="Q07905"/>
<dbReference type="UniPathway" id="UPA00068">
    <property type="reaction ID" value="UER00107"/>
</dbReference>
<dbReference type="GO" id="GO:0005737">
    <property type="term" value="C:cytoplasm"/>
    <property type="evidence" value="ECO:0007669"/>
    <property type="project" value="UniProtKB-SubCell"/>
</dbReference>
<dbReference type="GO" id="GO:0003991">
    <property type="term" value="F:acetylglutamate kinase activity"/>
    <property type="evidence" value="ECO:0007669"/>
    <property type="project" value="UniProtKB-UniRule"/>
</dbReference>
<dbReference type="GO" id="GO:0005524">
    <property type="term" value="F:ATP binding"/>
    <property type="evidence" value="ECO:0007669"/>
    <property type="project" value="UniProtKB-UniRule"/>
</dbReference>
<dbReference type="GO" id="GO:0042450">
    <property type="term" value="P:arginine biosynthetic process via ornithine"/>
    <property type="evidence" value="ECO:0007669"/>
    <property type="project" value="UniProtKB-UniRule"/>
</dbReference>
<dbReference type="GO" id="GO:0006526">
    <property type="term" value="P:L-arginine biosynthetic process"/>
    <property type="evidence" value="ECO:0007669"/>
    <property type="project" value="UniProtKB-UniPathway"/>
</dbReference>
<dbReference type="CDD" id="cd04238">
    <property type="entry name" value="AAK_NAGK-like"/>
    <property type="match status" value="1"/>
</dbReference>
<dbReference type="FunFam" id="3.40.1160.10:FF:000004">
    <property type="entry name" value="Acetylglutamate kinase"/>
    <property type="match status" value="1"/>
</dbReference>
<dbReference type="Gene3D" id="3.40.1160.10">
    <property type="entry name" value="Acetylglutamate kinase-like"/>
    <property type="match status" value="1"/>
</dbReference>
<dbReference type="HAMAP" id="MF_00082">
    <property type="entry name" value="ArgB"/>
    <property type="match status" value="1"/>
</dbReference>
<dbReference type="InterPro" id="IPR036393">
    <property type="entry name" value="AceGlu_kinase-like_sf"/>
</dbReference>
<dbReference type="InterPro" id="IPR004662">
    <property type="entry name" value="AcgluKinase_fam"/>
</dbReference>
<dbReference type="InterPro" id="IPR037528">
    <property type="entry name" value="ArgB"/>
</dbReference>
<dbReference type="InterPro" id="IPR001048">
    <property type="entry name" value="Asp/Glu/Uridylate_kinase"/>
</dbReference>
<dbReference type="InterPro" id="IPR001057">
    <property type="entry name" value="Glu/AcGlu_kinase"/>
</dbReference>
<dbReference type="NCBIfam" id="TIGR00761">
    <property type="entry name" value="argB"/>
    <property type="match status" value="1"/>
</dbReference>
<dbReference type="PANTHER" id="PTHR23342">
    <property type="entry name" value="N-ACETYLGLUTAMATE SYNTHASE"/>
    <property type="match status" value="1"/>
</dbReference>
<dbReference type="PANTHER" id="PTHR23342:SF0">
    <property type="entry name" value="N-ACETYLGLUTAMATE SYNTHASE, MITOCHONDRIAL"/>
    <property type="match status" value="1"/>
</dbReference>
<dbReference type="Pfam" id="PF00696">
    <property type="entry name" value="AA_kinase"/>
    <property type="match status" value="1"/>
</dbReference>
<dbReference type="PIRSF" id="PIRSF000728">
    <property type="entry name" value="NAGK"/>
    <property type="match status" value="1"/>
</dbReference>
<dbReference type="PRINTS" id="PR00474">
    <property type="entry name" value="GLU5KINASE"/>
</dbReference>
<dbReference type="SUPFAM" id="SSF53633">
    <property type="entry name" value="Carbamate kinase-like"/>
    <property type="match status" value="1"/>
</dbReference>
<accession>Q07905</accession>
<sequence>MGKTVVIKCGGSVLDELSPAFFASVNAMRKQGMEVVIVHGGGPEIGQMLKTLRVPSEFVNGLRKTTKDVLAVVEMVLSGKVNKQLASMLRQHGLPAVGVSGVDGGLLEAEPIDLAKLGYVGRVKTVRSQLLRTLLAAGYIPVISPLGIDQNGQTYNINADTAAGAVAAAIGASQLAFVTNVPGILRDGALVAEATAEMIERLIEDGVITGGMIPKVQAALSALSDALPEVMIVSGKTTFYQNGTWHGTTIRKEVGVYL</sequence>
<feature type="chain" id="PRO_0000112586" description="Acetylglutamate kinase">
    <location>
        <begin position="1"/>
        <end position="258"/>
    </location>
</feature>
<feature type="binding site" evidence="1">
    <location>
        <begin position="41"/>
        <end position="42"/>
    </location>
    <ligand>
        <name>substrate</name>
    </ligand>
</feature>
<feature type="binding site" evidence="1">
    <location>
        <position position="63"/>
    </location>
    <ligand>
        <name>substrate</name>
    </ligand>
</feature>
<feature type="binding site" evidence="1">
    <location>
        <position position="156"/>
    </location>
    <ligand>
        <name>substrate</name>
    </ligand>
</feature>
<feature type="site" description="Transition state stabilizer" evidence="1">
    <location>
        <position position="8"/>
    </location>
</feature>
<feature type="site" description="Transition state stabilizer" evidence="1">
    <location>
        <position position="215"/>
    </location>
</feature>
<gene>
    <name evidence="1" type="primary">argB</name>
</gene>
<reference key="1">
    <citation type="journal article" date="1993" name="J. Gen. Microbiol.">
        <title>Primary structure, partial purification and regulation of key enzymes of the acetyl cycle of arginine biosynthesis in Bacillus stearothermophilus: dual function of ornithine acetyltransferase.</title>
        <authorList>
            <person name="Sakanyan V."/>
            <person name="Charlier D.R.M."/>
            <person name="Legrain C."/>
            <person name="Kochikyan A."/>
            <person name="Mett I."/>
            <person name="Pierard P."/>
            <person name="Glansdorff N."/>
        </authorList>
    </citation>
    <scope>NUCLEOTIDE SEQUENCE [GENOMIC DNA]</scope>
    <source>
        <strain>NCIMB 8224 / CCM 2186 / NCA C-1235.1 / VKM B-718</strain>
    </source>
</reference>